<organism>
    <name type="scientific">Eremothecium gossypii (strain ATCC 10895 / CBS 109.51 / FGSC 9923 / NRRL Y-1056)</name>
    <name type="common">Yeast</name>
    <name type="synonym">Ashbya gossypii</name>
    <dbReference type="NCBI Taxonomy" id="284811"/>
    <lineage>
        <taxon>Eukaryota</taxon>
        <taxon>Fungi</taxon>
        <taxon>Dikarya</taxon>
        <taxon>Ascomycota</taxon>
        <taxon>Saccharomycotina</taxon>
        <taxon>Saccharomycetes</taxon>
        <taxon>Saccharomycetales</taxon>
        <taxon>Saccharomycetaceae</taxon>
        <taxon>Eremothecium</taxon>
    </lineage>
</organism>
<evidence type="ECO:0000250" key="1"/>
<evidence type="ECO:0000256" key="2">
    <source>
        <dbReference type="SAM" id="MobiDB-lite"/>
    </source>
</evidence>
<evidence type="ECO:0000305" key="3"/>
<protein>
    <recommendedName>
        <fullName>Serine/threonine-protein phosphatase 4 regulatory subunit 2</fullName>
        <shortName>PP4R2</shortName>
    </recommendedName>
</protein>
<comment type="function">
    <text evidence="1">Regulatory subunit of the histone H2A phosphatase complex, which dephosphorylates H2AS128ph (gamma-H2A) that has been displaced from sites of DNA lesions in the double-stranded DNA break repair process. Dephosphorylation is necessary for efficient recovery from the DNA damage checkpoint (By similarity).</text>
</comment>
<comment type="subunit">
    <text evidence="1">Regulatory subunit (R2) of the histone H2A phosphatase complex (HTP-C) consisting of PPH3, PSY2 and PSY4.</text>
</comment>
<comment type="subcellular location">
    <subcellularLocation>
        <location evidence="1">Nucleus</location>
    </subcellularLocation>
</comment>
<comment type="similarity">
    <text evidence="3">Belongs to the PPP4R2 family.</text>
</comment>
<reference key="1">
    <citation type="journal article" date="2004" name="Science">
        <title>The Ashbya gossypii genome as a tool for mapping the ancient Saccharomyces cerevisiae genome.</title>
        <authorList>
            <person name="Dietrich F.S."/>
            <person name="Voegeli S."/>
            <person name="Brachat S."/>
            <person name="Lerch A."/>
            <person name="Gates K."/>
            <person name="Steiner S."/>
            <person name="Mohr C."/>
            <person name="Poehlmann R."/>
            <person name="Luedi P."/>
            <person name="Choi S."/>
            <person name="Wing R.A."/>
            <person name="Flavier A."/>
            <person name="Gaffney T.D."/>
            <person name="Philippsen P."/>
        </authorList>
    </citation>
    <scope>NUCLEOTIDE SEQUENCE [LARGE SCALE GENOMIC DNA]</scope>
    <source>
        <strain>ATCC 10895 / CBS 109.51 / FGSC 9923 / NRRL Y-1056</strain>
    </source>
</reference>
<reference key="2">
    <citation type="journal article" date="2013" name="G3 (Bethesda)">
        <title>Genomes of Ashbya fungi isolated from insects reveal four mating-type loci, numerous translocations, lack of transposons, and distinct gene duplications.</title>
        <authorList>
            <person name="Dietrich F.S."/>
            <person name="Voegeli S."/>
            <person name="Kuo S."/>
            <person name="Philippsen P."/>
        </authorList>
    </citation>
    <scope>GENOME REANNOTATION</scope>
    <scope>SEQUENCE REVISION TO 84 AND 90</scope>
    <source>
        <strain>ATCC 10895 / CBS 109.51 / FGSC 9923 / NRRL Y-1056</strain>
    </source>
</reference>
<feature type="chain" id="PRO_0000223652" description="Serine/threonine-protein phosphatase 4 regulatory subunit 2">
    <location>
        <begin position="1"/>
        <end position="356"/>
    </location>
</feature>
<feature type="region of interest" description="Disordered" evidence="2">
    <location>
        <begin position="202"/>
        <end position="335"/>
    </location>
</feature>
<feature type="compositionally biased region" description="Acidic residues" evidence="2">
    <location>
        <begin position="202"/>
        <end position="240"/>
    </location>
</feature>
<feature type="compositionally biased region" description="Polar residues" evidence="2">
    <location>
        <begin position="326"/>
        <end position="335"/>
    </location>
</feature>
<sequence length="356" mass="38798">MQSGEESRLGIKCASLHEELTQIVIDQDVGPLQRVPASEFLARLVEHMGQTIPREVFGAEAETGTRDLERLGAIVAYIDENFAAQNVLPFTIQRICELCYHPLHYFRVGELRKFVNALEKVCYVRSSWSAGYGAVPSPAEGTPTREASVDVSMSKIPWLPDDGGRDLRQFIEKIESIVSVNFGYEDDEDEGRDAAIQEYYDNEGAGDDEDDDQDYVDEDSATSEDEEEDVEEEEEEEGPEPEVGLEPVHAESAPEECVGTNKRTTAEREDCHMQPCAAAHSTDGAHPCGLKRSKLQEDGATMASPPDIVAEGGSHDPQVVDASKPPQLTTSATNVSCNASIEATVSLDDDSTAGGE</sequence>
<name>PP4R2_EREGS</name>
<keyword id="KW-0539">Nucleus</keyword>
<keyword id="KW-1185">Reference proteome</keyword>
<gene>
    <name type="primary">PSY4</name>
    <name type="ordered locus">ABR147C</name>
</gene>
<proteinExistence type="inferred from homology"/>
<accession>Q75D77</accession>
<dbReference type="EMBL" id="AE016815">
    <property type="protein sequence ID" value="AAS50918.2"/>
    <property type="molecule type" value="Genomic_DNA"/>
</dbReference>
<dbReference type="RefSeq" id="NP_983094.2">
    <property type="nucleotide sequence ID" value="NM_208447.2"/>
</dbReference>
<dbReference type="STRING" id="284811.Q75D77"/>
<dbReference type="EnsemblFungi" id="AAS50918">
    <property type="protein sequence ID" value="AAS50918"/>
    <property type="gene ID" value="AGOS_ABR147C"/>
</dbReference>
<dbReference type="GeneID" id="4619204"/>
<dbReference type="KEGG" id="ago:AGOS_ABR147C"/>
<dbReference type="eggNOG" id="ENOG502S2WZ">
    <property type="taxonomic scope" value="Eukaryota"/>
</dbReference>
<dbReference type="HOGENOM" id="CLU_036743_1_0_1"/>
<dbReference type="InParanoid" id="Q75D77"/>
<dbReference type="OMA" id="EREDCHM"/>
<dbReference type="OrthoDB" id="341898at2759"/>
<dbReference type="Proteomes" id="UP000000591">
    <property type="component" value="Chromosome II"/>
</dbReference>
<dbReference type="GO" id="GO:0005737">
    <property type="term" value="C:cytoplasm"/>
    <property type="evidence" value="ECO:0000318"/>
    <property type="project" value="GO_Central"/>
</dbReference>
<dbReference type="GO" id="GO:0005634">
    <property type="term" value="C:nucleus"/>
    <property type="evidence" value="ECO:0000318"/>
    <property type="project" value="GO_Central"/>
</dbReference>
<dbReference type="GO" id="GO:0030289">
    <property type="term" value="C:protein phosphatase 4 complex"/>
    <property type="evidence" value="ECO:0000318"/>
    <property type="project" value="GO_Central"/>
</dbReference>
<dbReference type="GO" id="GO:0019888">
    <property type="term" value="F:protein phosphatase regulator activity"/>
    <property type="evidence" value="ECO:0000318"/>
    <property type="project" value="GO_Central"/>
</dbReference>
<dbReference type="InterPro" id="IPR015267">
    <property type="entry name" value="PPP4R2"/>
</dbReference>
<dbReference type="PANTHER" id="PTHR16487">
    <property type="entry name" value="PPP4R2-RELATED PROTEIN"/>
    <property type="match status" value="1"/>
</dbReference>
<dbReference type="PANTHER" id="PTHR16487:SF0">
    <property type="entry name" value="PROTEIN PHOSPHATASE 4 REGULATORY SUBUNIT 2-RELATED"/>
    <property type="match status" value="1"/>
</dbReference>
<dbReference type="Pfam" id="PF09184">
    <property type="entry name" value="PPP4R2"/>
    <property type="match status" value="1"/>
</dbReference>